<proteinExistence type="evidence at transcript level"/>
<evidence type="ECO:0000255" key="1">
    <source>
        <dbReference type="HAMAP-Rule" id="MF_00860"/>
    </source>
</evidence>
<evidence type="ECO:0000305" key="2"/>
<sequence>MASSMLSSAAVVTSPAQATMVAPFTGLKSSSAFPVTRKANNDITSIVSNGGRVSCMKVWPPVGKKKFETLSYLPDLTEVELGKEVDYLLRNKWIPCVEFELEHGFVYREHGSTPGYYDGRYWTMWKLPLFGCTDSAQVLKEVQECKTEYPNAFIRIIGFDNNRQVQCISFIAYKPPSFTGA</sequence>
<name>RBS1_BRANA</name>
<protein>
    <recommendedName>
        <fullName evidence="1">Ribulose bisphosphate carboxylase small subunit, chloroplastic 1</fullName>
        <shortName evidence="1">RuBisCO small subunit 1</shortName>
    </recommendedName>
</protein>
<dbReference type="EMBL" id="X61097">
    <property type="protein sequence ID" value="CAA43410.1"/>
    <property type="molecule type" value="Genomic_DNA"/>
</dbReference>
<dbReference type="EMBL" id="X07367">
    <property type="protein sequence ID" value="CAA30290.1"/>
    <property type="molecule type" value="mRNA"/>
</dbReference>
<dbReference type="PIR" id="S00934">
    <property type="entry name" value="RKRPS"/>
</dbReference>
<dbReference type="PIR" id="S37292">
    <property type="entry name" value="S37292"/>
</dbReference>
<dbReference type="RefSeq" id="XP_013741772.1">
    <property type="nucleotide sequence ID" value="XM_013886318.1"/>
</dbReference>
<dbReference type="SMR" id="P05346"/>
<dbReference type="EnsemblPlants" id="CDX74532">
    <property type="protein sequence ID" value="CDX74532"/>
    <property type="gene ID" value="GSBRNA2T00114447001"/>
</dbReference>
<dbReference type="EnsemblPlants" id="CDY01671">
    <property type="protein sequence ID" value="CDY01671"/>
    <property type="gene ID" value="GSBRNA2T00112745001"/>
</dbReference>
<dbReference type="GeneID" id="106444894"/>
<dbReference type="Gramene" id="CDX74532">
    <property type="protein sequence ID" value="CDX74532"/>
    <property type="gene ID" value="GSBRNA2T00114447001"/>
</dbReference>
<dbReference type="Gramene" id="CDY01671">
    <property type="protein sequence ID" value="CDY01671"/>
    <property type="gene ID" value="GSBRNA2T00112745001"/>
</dbReference>
<dbReference type="KEGG" id="bna:106444894"/>
<dbReference type="OMA" id="RKNWVPC"/>
<dbReference type="OrthoDB" id="1029394at2759"/>
<dbReference type="GO" id="GO:0009507">
    <property type="term" value="C:chloroplast"/>
    <property type="evidence" value="ECO:0007669"/>
    <property type="project" value="UniProtKB-SubCell"/>
</dbReference>
<dbReference type="GO" id="GO:0016984">
    <property type="term" value="F:ribulose-bisphosphate carboxylase activity"/>
    <property type="evidence" value="ECO:0007669"/>
    <property type="project" value="UniProtKB-UniRule"/>
</dbReference>
<dbReference type="GO" id="GO:0009853">
    <property type="term" value="P:photorespiration"/>
    <property type="evidence" value="ECO:0007669"/>
    <property type="project" value="UniProtKB-KW"/>
</dbReference>
<dbReference type="GO" id="GO:0019253">
    <property type="term" value="P:reductive pentose-phosphate cycle"/>
    <property type="evidence" value="ECO:0007669"/>
    <property type="project" value="UniProtKB-UniRule"/>
</dbReference>
<dbReference type="CDD" id="cd03527">
    <property type="entry name" value="RuBisCO_small"/>
    <property type="match status" value="1"/>
</dbReference>
<dbReference type="FunFam" id="3.30.190.10:FF:000001">
    <property type="entry name" value="Ribulose bisphosphate carboxylase small chain, chloroplastic"/>
    <property type="match status" value="1"/>
</dbReference>
<dbReference type="Gene3D" id="3.30.190.10">
    <property type="entry name" value="Ribulose bisphosphate carboxylase, small subunit"/>
    <property type="match status" value="1"/>
</dbReference>
<dbReference type="HAMAP" id="MF_00859">
    <property type="entry name" value="RuBisCO_S_bact"/>
    <property type="match status" value="1"/>
</dbReference>
<dbReference type="InterPro" id="IPR024681">
    <property type="entry name" value="RuBisCO_ssu"/>
</dbReference>
<dbReference type="InterPro" id="IPR000894">
    <property type="entry name" value="RuBisCO_ssu_dom"/>
</dbReference>
<dbReference type="InterPro" id="IPR024680">
    <property type="entry name" value="RuBisCO_ssu_N"/>
</dbReference>
<dbReference type="InterPro" id="IPR036385">
    <property type="entry name" value="RuBisCO_ssu_sf"/>
</dbReference>
<dbReference type="PANTHER" id="PTHR31262">
    <property type="entry name" value="RIBULOSE BISPHOSPHATE CARBOXYLASE SMALL CHAIN 1, CHLOROPLASTIC"/>
    <property type="match status" value="1"/>
</dbReference>
<dbReference type="PANTHER" id="PTHR31262:SF10">
    <property type="entry name" value="RIBULOSE BISPHOSPHATE CARBOXYLASE SMALL SUBUNIT 1A, CHLOROPLASTIC-RELATED"/>
    <property type="match status" value="1"/>
</dbReference>
<dbReference type="Pfam" id="PF12338">
    <property type="entry name" value="RbcS"/>
    <property type="match status" value="1"/>
</dbReference>
<dbReference type="Pfam" id="PF00101">
    <property type="entry name" value="RuBisCO_small"/>
    <property type="match status" value="1"/>
</dbReference>
<dbReference type="PRINTS" id="PR00152">
    <property type="entry name" value="RUBISCOSMALL"/>
</dbReference>
<dbReference type="SMART" id="SM00961">
    <property type="entry name" value="RuBisCO_small"/>
    <property type="match status" value="1"/>
</dbReference>
<dbReference type="SUPFAM" id="SSF55239">
    <property type="entry name" value="RuBisCO, small subunit"/>
    <property type="match status" value="1"/>
</dbReference>
<comment type="function">
    <text evidence="1">RuBisCO catalyzes two reactions: the carboxylation of D-ribulose 1,5-bisphosphate, the primary event in carbon dioxide fixation, as well as the oxidative fragmentation of the pentose substrate. Both reactions occur simultaneously and in competition at the same active site. Although the small subunit is not catalytic it is essential for maximal activity.</text>
</comment>
<comment type="subunit">
    <text evidence="1">Heterohexadecamer of 8 large and 8 small subunits.</text>
</comment>
<comment type="subcellular location">
    <subcellularLocation>
        <location evidence="1">Plastid</location>
        <location evidence="1">Chloroplast</location>
    </subcellularLocation>
</comment>
<comment type="miscellaneous">
    <text evidence="1">The basic functional RuBisCO is composed of a large chain homodimer in a 'head-to-tail' conformation. In form I RuBisCO this homodimer is arranged in a barrel-like tetramer with the small subunits forming a tetrameric 'cap' on each end of the 'barrel'.</text>
</comment>
<comment type="similarity">
    <text evidence="1">Belongs to the RuBisCO small chain family.</text>
</comment>
<gene>
    <name evidence="1" type="primary">RBCS1</name>
    <name type="synonym">RBCS</name>
</gene>
<organism>
    <name type="scientific">Brassica napus</name>
    <name type="common">Rape</name>
    <dbReference type="NCBI Taxonomy" id="3708"/>
    <lineage>
        <taxon>Eukaryota</taxon>
        <taxon>Viridiplantae</taxon>
        <taxon>Streptophyta</taxon>
        <taxon>Embryophyta</taxon>
        <taxon>Tracheophyta</taxon>
        <taxon>Spermatophyta</taxon>
        <taxon>Magnoliopsida</taxon>
        <taxon>eudicotyledons</taxon>
        <taxon>Gunneridae</taxon>
        <taxon>Pentapetalae</taxon>
        <taxon>rosids</taxon>
        <taxon>malvids</taxon>
        <taxon>Brassicales</taxon>
        <taxon>Brassicaceae</taxon>
        <taxon>Brassiceae</taxon>
        <taxon>Brassica</taxon>
    </lineage>
</organism>
<feature type="transit peptide" description="Chloroplast" evidence="1">
    <location>
        <begin position="1"/>
        <end position="54"/>
    </location>
</feature>
<feature type="chain" id="PRO_0000031469" description="Ribulose bisphosphate carboxylase small subunit, chloroplastic 1" evidence="1">
    <location>
        <begin position="55"/>
        <end position="181"/>
    </location>
</feature>
<feature type="sequence conflict" description="In Ref. 2; CAA30290." evidence="2" ref="2">
    <original>S</original>
    <variation>Y</variation>
    <location>
        <position position="3"/>
    </location>
</feature>
<feature type="sequence conflict" description="In Ref. 2; CAA30290." evidence="2" ref="2">
    <original>SCMK</original>
    <variation>NSMQ</variation>
    <location>
        <begin position="54"/>
        <end position="57"/>
    </location>
</feature>
<keyword id="KW-0113">Calvin cycle</keyword>
<keyword id="KW-0120">Carbon dioxide fixation</keyword>
<keyword id="KW-0150">Chloroplast</keyword>
<keyword id="KW-0601">Photorespiration</keyword>
<keyword id="KW-0602">Photosynthesis</keyword>
<keyword id="KW-0934">Plastid</keyword>
<keyword id="KW-0809">Transit peptide</keyword>
<accession>P05346</accession>
<reference key="1">
    <citation type="journal article" date="1992" name="Curr. Genet.">
        <title>5'-upstream cis-elements and binding factor(s) potentially involved in light-regulated expression of a Brassica napus rbcS gene.</title>
        <authorList>
            <person name="Fiebig C."/>
            <person name="Link G."/>
        </authorList>
    </citation>
    <scope>NUCLEOTIDE SEQUENCE [GENOMIC DNA]</scope>
    <source>
        <strain>cv. Semundo Winterraps</strain>
        <tissue>Cotyledon</tissue>
    </source>
</reference>
<reference key="2">
    <citation type="journal article" date="1988" name="Nucleic Acids Res.">
        <title>Nucleotide sequence of a full length cDNA clone of a Brassica napus ribulose bisphosphate carboxylase-oxygenase small subunit gene.</title>
        <authorList>
            <person name="Baszczynski C.L."/>
            <person name="Fallis L."/>
            <person name="Bellemare G."/>
        </authorList>
    </citation>
    <scope>NUCLEOTIDE SEQUENCE [MRNA]</scope>
</reference>